<proteinExistence type="inferred from homology"/>
<organism>
    <name type="scientific">Mycobacterium tuberculosis (strain CDC 1551 / Oshkosh)</name>
    <dbReference type="NCBI Taxonomy" id="83331"/>
    <lineage>
        <taxon>Bacteria</taxon>
        <taxon>Bacillati</taxon>
        <taxon>Actinomycetota</taxon>
        <taxon>Actinomycetes</taxon>
        <taxon>Mycobacteriales</taxon>
        <taxon>Mycobacteriaceae</taxon>
        <taxon>Mycobacterium</taxon>
        <taxon>Mycobacterium tuberculosis complex</taxon>
    </lineage>
</organism>
<feature type="chain" id="PRO_0000426792" description="Phenolphthiocerol/phthiocerol polyketide synthase subunit E">
    <location>
        <begin position="1"/>
        <end position="1488"/>
    </location>
</feature>
<feature type="domain" description="Ketosynthase family 3 (KS3)" evidence="4">
    <location>
        <begin position="5"/>
        <end position="438"/>
    </location>
</feature>
<feature type="domain" description="Carrier" evidence="3">
    <location>
        <begin position="930"/>
        <end position="1004"/>
    </location>
</feature>
<feature type="region of interest" description="Acyltransferase" evidence="1">
    <location>
        <begin position="551"/>
        <end position="868"/>
    </location>
</feature>
<feature type="active site" description="For beta-ketoacyl synthase activity" evidence="4">
    <location>
        <position position="184"/>
    </location>
</feature>
<feature type="active site" description="For beta-ketoacyl synthase activity" evidence="4">
    <location>
        <position position="320"/>
    </location>
</feature>
<feature type="active site" description="For beta-ketoacyl synthase activity" evidence="4">
    <location>
        <position position="361"/>
    </location>
</feature>
<feature type="active site" description="For malonyltransferase activity" evidence="5">
    <location>
        <position position="641"/>
    </location>
</feature>
<feature type="binding site" evidence="1">
    <location>
        <begin position="1286"/>
        <end position="1331"/>
    </location>
    <ligand>
        <name>NADP(+)</name>
        <dbReference type="ChEBI" id="CHEBI:58349"/>
    </ligand>
</feature>
<feature type="modified residue" description="O-(pantetheine 4'-phosphoryl)serine" evidence="3">
    <location>
        <position position="965"/>
    </location>
</feature>
<comment type="function">
    <text evidence="2">Part of the PpsABCDE complex involved in the biosynthesis of the lipid core common to phthiocerols and phenolphthiocerols by successive additions of malonyl-CoA or methylmalonyl-CoA extender units. PpsA can accept as substrate the activated forms of either icosanoyl (C20), docosanoyl (C22) or lignoceroyl (C24) groups from FadD26, or a (4-hydroxyphenyl)-C17 or (4-hydroxyphenyl)-C19 fatty acyl from FadD29. PpsA initiates the biosynthesis and extends its substrate using a malonyl-CoA extender unit. The PpsB and PpsC proteins add the second and third malonyl-CoA extender units. PpsD adds an (R)-methylmalonyl unit and PpsE adds a second (R)-methylmalonyl unit. The incorporation of the methylmalonyl units results in formation of two branched methyl groups in the elongated product.</text>
</comment>
<comment type="catalytic activity">
    <reaction evidence="2">
        <text>icosanoyl-[(phenol)carboxyphthiodiolenone synthase] + 2 (S)-methylmalonyl-CoA + 3 malonyl-CoA + 5 NADPH + 10 H(+) = C32-carboxyphthiodiolenone-[(phenol)carboxyphthiodiolenone synthase] + 5 CO2 + 5 NADP(+) + 5 CoA + 2 H2O</text>
        <dbReference type="Rhea" id="RHEA:57748"/>
        <dbReference type="Rhea" id="RHEA-COMP:14985"/>
        <dbReference type="Rhea" id="RHEA-COMP:14986"/>
        <dbReference type="ChEBI" id="CHEBI:15377"/>
        <dbReference type="ChEBI" id="CHEBI:15378"/>
        <dbReference type="ChEBI" id="CHEBI:16526"/>
        <dbReference type="ChEBI" id="CHEBI:57287"/>
        <dbReference type="ChEBI" id="CHEBI:57327"/>
        <dbReference type="ChEBI" id="CHEBI:57384"/>
        <dbReference type="ChEBI" id="CHEBI:57783"/>
        <dbReference type="ChEBI" id="CHEBI:58349"/>
        <dbReference type="ChEBI" id="CHEBI:87848"/>
        <dbReference type="ChEBI" id="CHEBI:142236"/>
        <dbReference type="EC" id="2.3.1.292"/>
    </reaction>
</comment>
<comment type="catalytic activity">
    <reaction evidence="2">
        <text>docosanoyl-[(phenol)carboxyphthiodiolenone synthase] + 2 (S)-methylmalonyl-CoA + 3 malonyl-CoA + 5 NADPH + 10 H(+) = C34-carboxyphthiodiolenone-[(phenol)carboxyphthiodiolenone synthase] + 5 CO2 + 5 NADP(+) + 5 CoA + 2 H2O</text>
        <dbReference type="Rhea" id="RHEA:57752"/>
        <dbReference type="Rhea" id="RHEA-COMP:14987"/>
        <dbReference type="Rhea" id="RHEA-COMP:14988"/>
        <dbReference type="ChEBI" id="CHEBI:15377"/>
        <dbReference type="ChEBI" id="CHEBI:15378"/>
        <dbReference type="ChEBI" id="CHEBI:16526"/>
        <dbReference type="ChEBI" id="CHEBI:57287"/>
        <dbReference type="ChEBI" id="CHEBI:57327"/>
        <dbReference type="ChEBI" id="CHEBI:57384"/>
        <dbReference type="ChEBI" id="CHEBI:57783"/>
        <dbReference type="ChEBI" id="CHEBI:58349"/>
        <dbReference type="ChEBI" id="CHEBI:142237"/>
        <dbReference type="ChEBI" id="CHEBI:142238"/>
        <dbReference type="EC" id="2.3.1.292"/>
    </reaction>
</comment>
<comment type="catalytic activity">
    <reaction evidence="2">
        <text>17-(4-hydroxyphenyl)heptadecanoyl-[(phenol)carboxyphthiodiolenone synthase] + 2 (S)-methylmalonyl-CoA + 3 malonyl-CoA + 5 NADPH + 10 H(+) = C35-(phenol)carboxyphthiodiolenone-[(phenol)carboxyphthiodiolenone synthase] + 5 CO2 + 5 NADP(+) + 5 CoA + 2 H2O</text>
        <dbReference type="Rhea" id="RHEA:57756"/>
        <dbReference type="Rhea" id="RHEA-COMP:14272"/>
        <dbReference type="Rhea" id="RHEA-COMP:14989"/>
        <dbReference type="ChEBI" id="CHEBI:15377"/>
        <dbReference type="ChEBI" id="CHEBI:15378"/>
        <dbReference type="ChEBI" id="CHEBI:16526"/>
        <dbReference type="ChEBI" id="CHEBI:57287"/>
        <dbReference type="ChEBI" id="CHEBI:57327"/>
        <dbReference type="ChEBI" id="CHEBI:57384"/>
        <dbReference type="ChEBI" id="CHEBI:57783"/>
        <dbReference type="ChEBI" id="CHEBI:58349"/>
        <dbReference type="ChEBI" id="CHEBI:133300"/>
        <dbReference type="ChEBI" id="CHEBI:142259"/>
        <dbReference type="EC" id="2.3.1.292"/>
    </reaction>
</comment>
<comment type="catalytic activity">
    <reaction evidence="2">
        <text>19-(4-hydroxyphenyl)nonadecanoyl-[(phenol)carboxyphthiodiolenone synthase] + 2 (S)-methylmalonyl-CoA + 3 malonyl-CoA + 5 NADPH + 10 H(+) = C37-(phenol)carboxyphthiodiolenone-[(phenol)carboxyphthiodiolenone synthase] + 5 CO2 + 5 NADP(+) + 5 CoA + 2 H2O</text>
        <dbReference type="Rhea" id="RHEA:57760"/>
        <dbReference type="Rhea" id="RHEA-COMP:14273"/>
        <dbReference type="Rhea" id="RHEA-COMP:14990"/>
        <dbReference type="ChEBI" id="CHEBI:15377"/>
        <dbReference type="ChEBI" id="CHEBI:15378"/>
        <dbReference type="ChEBI" id="CHEBI:16526"/>
        <dbReference type="ChEBI" id="CHEBI:57287"/>
        <dbReference type="ChEBI" id="CHEBI:57327"/>
        <dbReference type="ChEBI" id="CHEBI:57384"/>
        <dbReference type="ChEBI" id="CHEBI:57783"/>
        <dbReference type="ChEBI" id="CHEBI:58349"/>
        <dbReference type="ChEBI" id="CHEBI:133301"/>
        <dbReference type="ChEBI" id="CHEBI:142260"/>
        <dbReference type="EC" id="2.3.1.292"/>
    </reaction>
</comment>
<comment type="cofactor">
    <cofactor evidence="2">
        <name>NADP(+)</name>
        <dbReference type="ChEBI" id="CHEBI:58349"/>
    </cofactor>
</comment>
<comment type="cofactor">
    <cofactor evidence="1">
        <name>pantetheine 4'-phosphate</name>
        <dbReference type="ChEBI" id="CHEBI:47942"/>
    </cofactor>
    <text evidence="1">Binds 1 phosphopantetheine covalently.</text>
</comment>
<comment type="pathway">
    <text evidence="2">Lipid metabolism; fatty acid biosynthesis.</text>
</comment>
<gene>
    <name type="primary">ppsE</name>
    <name type="ordered locus">MT3005</name>
</gene>
<accession>P9WQE0</accession>
<accession>L0TDU0</accession>
<accession>P96204</accession>
<accession>Q7D6E9</accession>
<dbReference type="EC" id="2.3.1.292" evidence="2"/>
<dbReference type="EMBL" id="AE000516">
    <property type="protein sequence ID" value="AAK47332.1"/>
    <property type="molecule type" value="Genomic_DNA"/>
</dbReference>
<dbReference type="PIR" id="C70984">
    <property type="entry name" value="C70984"/>
</dbReference>
<dbReference type="RefSeq" id="WP_003900602.1">
    <property type="nucleotide sequence ID" value="NZ_KK341227.1"/>
</dbReference>
<dbReference type="SMR" id="P9WQE0"/>
<dbReference type="KEGG" id="mtc:MT3005"/>
<dbReference type="PATRIC" id="fig|83331.31.peg.3245"/>
<dbReference type="HOGENOM" id="CLU_000022_16_14_11"/>
<dbReference type="UniPathway" id="UPA00094"/>
<dbReference type="Proteomes" id="UP000001020">
    <property type="component" value="Chromosome"/>
</dbReference>
<dbReference type="GO" id="GO:0005737">
    <property type="term" value="C:cytoplasm"/>
    <property type="evidence" value="ECO:0007669"/>
    <property type="project" value="TreeGrafter"/>
</dbReference>
<dbReference type="GO" id="GO:0005886">
    <property type="term" value="C:plasma membrane"/>
    <property type="evidence" value="ECO:0007669"/>
    <property type="project" value="TreeGrafter"/>
</dbReference>
<dbReference type="GO" id="GO:0004315">
    <property type="term" value="F:3-oxoacyl-[acyl-carrier-protein] synthase activity"/>
    <property type="evidence" value="ECO:0007669"/>
    <property type="project" value="InterPro"/>
</dbReference>
<dbReference type="GO" id="GO:0004312">
    <property type="term" value="F:fatty acid synthase activity"/>
    <property type="evidence" value="ECO:0007669"/>
    <property type="project" value="TreeGrafter"/>
</dbReference>
<dbReference type="GO" id="GO:0016491">
    <property type="term" value="F:oxidoreductase activity"/>
    <property type="evidence" value="ECO:0007669"/>
    <property type="project" value="UniProtKB-KW"/>
</dbReference>
<dbReference type="GO" id="GO:0031177">
    <property type="term" value="F:phosphopantetheine binding"/>
    <property type="evidence" value="ECO:0007669"/>
    <property type="project" value="InterPro"/>
</dbReference>
<dbReference type="GO" id="GO:0071770">
    <property type="term" value="P:DIM/DIP cell wall layer assembly"/>
    <property type="evidence" value="ECO:0007669"/>
    <property type="project" value="TreeGrafter"/>
</dbReference>
<dbReference type="GO" id="GO:0006633">
    <property type="term" value="P:fatty acid biosynthetic process"/>
    <property type="evidence" value="ECO:0007669"/>
    <property type="project" value="UniProtKB-UniPathway"/>
</dbReference>
<dbReference type="CDD" id="cd00833">
    <property type="entry name" value="PKS"/>
    <property type="match status" value="1"/>
</dbReference>
<dbReference type="FunFam" id="1.10.1200.10:FF:000005">
    <property type="entry name" value="Nonribosomal peptide synthetase 1"/>
    <property type="match status" value="1"/>
</dbReference>
<dbReference type="FunFam" id="3.40.47.10:FF:000042">
    <property type="entry name" value="Polyketide synthase Pks13"/>
    <property type="match status" value="1"/>
</dbReference>
<dbReference type="Gene3D" id="3.30.70.3290">
    <property type="match status" value="1"/>
</dbReference>
<dbReference type="Gene3D" id="3.40.47.10">
    <property type="match status" value="1"/>
</dbReference>
<dbReference type="Gene3D" id="1.10.1200.10">
    <property type="entry name" value="ACP-like"/>
    <property type="match status" value="1"/>
</dbReference>
<dbReference type="Gene3D" id="3.30.559.10">
    <property type="entry name" value="Chloramphenicol acetyltransferase-like domain"/>
    <property type="match status" value="1"/>
</dbReference>
<dbReference type="Gene3D" id="3.40.366.10">
    <property type="entry name" value="Malonyl-Coenzyme A Acyl Carrier Protein, domain 2"/>
    <property type="match status" value="1"/>
</dbReference>
<dbReference type="Gene3D" id="3.30.559.30">
    <property type="entry name" value="Nonribosomal peptide synthetase, condensation domain"/>
    <property type="match status" value="1"/>
</dbReference>
<dbReference type="InterPro" id="IPR001227">
    <property type="entry name" value="Ac_transferase_dom_sf"/>
</dbReference>
<dbReference type="InterPro" id="IPR036736">
    <property type="entry name" value="ACP-like_sf"/>
</dbReference>
<dbReference type="InterPro" id="IPR014043">
    <property type="entry name" value="Acyl_transferase_dom"/>
</dbReference>
<dbReference type="InterPro" id="IPR016035">
    <property type="entry name" value="Acyl_Trfase/lysoPLipase"/>
</dbReference>
<dbReference type="InterPro" id="IPR023213">
    <property type="entry name" value="CAT-like_dom_sf"/>
</dbReference>
<dbReference type="InterPro" id="IPR001242">
    <property type="entry name" value="Condensatn"/>
</dbReference>
<dbReference type="InterPro" id="IPR018201">
    <property type="entry name" value="Ketoacyl_synth_AS"/>
</dbReference>
<dbReference type="InterPro" id="IPR014031">
    <property type="entry name" value="Ketoacyl_synth_C"/>
</dbReference>
<dbReference type="InterPro" id="IPR014030">
    <property type="entry name" value="Ketoacyl_synth_N"/>
</dbReference>
<dbReference type="InterPro" id="IPR016036">
    <property type="entry name" value="Malonyl_transacylase_ACP-bd"/>
</dbReference>
<dbReference type="InterPro" id="IPR032821">
    <property type="entry name" value="PKS_assoc"/>
</dbReference>
<dbReference type="InterPro" id="IPR020841">
    <property type="entry name" value="PKS_Beta-ketoAc_synthase_dom"/>
</dbReference>
<dbReference type="InterPro" id="IPR050091">
    <property type="entry name" value="PKS_NRPS_Biosynth_Enz"/>
</dbReference>
<dbReference type="InterPro" id="IPR020806">
    <property type="entry name" value="PKS_PP-bd"/>
</dbReference>
<dbReference type="InterPro" id="IPR009081">
    <property type="entry name" value="PP-bd_ACP"/>
</dbReference>
<dbReference type="InterPro" id="IPR016039">
    <property type="entry name" value="Thiolase-like"/>
</dbReference>
<dbReference type="PANTHER" id="PTHR43775">
    <property type="entry name" value="FATTY ACID SYNTHASE"/>
    <property type="match status" value="1"/>
</dbReference>
<dbReference type="PANTHER" id="PTHR43775:SF37">
    <property type="entry name" value="SI:DKEY-61P9.11"/>
    <property type="match status" value="1"/>
</dbReference>
<dbReference type="Pfam" id="PF00698">
    <property type="entry name" value="Acyl_transf_1"/>
    <property type="match status" value="1"/>
</dbReference>
<dbReference type="Pfam" id="PF00668">
    <property type="entry name" value="Condensation"/>
    <property type="match status" value="1"/>
</dbReference>
<dbReference type="Pfam" id="PF16197">
    <property type="entry name" value="KAsynt_C_assoc"/>
    <property type="match status" value="1"/>
</dbReference>
<dbReference type="Pfam" id="PF00109">
    <property type="entry name" value="ketoacyl-synt"/>
    <property type="match status" value="1"/>
</dbReference>
<dbReference type="Pfam" id="PF02801">
    <property type="entry name" value="Ketoacyl-synt_C"/>
    <property type="match status" value="1"/>
</dbReference>
<dbReference type="Pfam" id="PF00550">
    <property type="entry name" value="PP-binding"/>
    <property type="match status" value="1"/>
</dbReference>
<dbReference type="SMART" id="SM00827">
    <property type="entry name" value="PKS_AT"/>
    <property type="match status" value="1"/>
</dbReference>
<dbReference type="SMART" id="SM00825">
    <property type="entry name" value="PKS_KS"/>
    <property type="match status" value="1"/>
</dbReference>
<dbReference type="SMART" id="SM00823">
    <property type="entry name" value="PKS_PP"/>
    <property type="match status" value="1"/>
</dbReference>
<dbReference type="SUPFAM" id="SSF47336">
    <property type="entry name" value="ACP-like"/>
    <property type="match status" value="1"/>
</dbReference>
<dbReference type="SUPFAM" id="SSF52777">
    <property type="entry name" value="CoA-dependent acyltransferases"/>
    <property type="match status" value="2"/>
</dbReference>
<dbReference type="SUPFAM" id="SSF52151">
    <property type="entry name" value="FabD/lysophospholipase-like"/>
    <property type="match status" value="1"/>
</dbReference>
<dbReference type="SUPFAM" id="SSF55048">
    <property type="entry name" value="Probable ACP-binding domain of malonyl-CoA ACP transacylase"/>
    <property type="match status" value="1"/>
</dbReference>
<dbReference type="SUPFAM" id="SSF53901">
    <property type="entry name" value="Thiolase-like"/>
    <property type="match status" value="1"/>
</dbReference>
<dbReference type="PROSITE" id="PS50075">
    <property type="entry name" value="CARRIER"/>
    <property type="match status" value="1"/>
</dbReference>
<dbReference type="PROSITE" id="PS00606">
    <property type="entry name" value="KS3_1"/>
    <property type="match status" value="1"/>
</dbReference>
<dbReference type="PROSITE" id="PS52004">
    <property type="entry name" value="KS3_2"/>
    <property type="match status" value="1"/>
</dbReference>
<reference key="1">
    <citation type="journal article" date="2002" name="J. Bacteriol.">
        <title>Whole-genome comparison of Mycobacterium tuberculosis clinical and laboratory strains.</title>
        <authorList>
            <person name="Fleischmann R.D."/>
            <person name="Alland D."/>
            <person name="Eisen J.A."/>
            <person name="Carpenter L."/>
            <person name="White O."/>
            <person name="Peterson J.D."/>
            <person name="DeBoy R.T."/>
            <person name="Dodson R.J."/>
            <person name="Gwinn M.L."/>
            <person name="Haft D.H."/>
            <person name="Hickey E.K."/>
            <person name="Kolonay J.F."/>
            <person name="Nelson W.C."/>
            <person name="Umayam L.A."/>
            <person name="Ermolaeva M.D."/>
            <person name="Salzberg S.L."/>
            <person name="Delcher A."/>
            <person name="Utterback T.R."/>
            <person name="Weidman J.F."/>
            <person name="Khouri H.M."/>
            <person name="Gill J."/>
            <person name="Mikula A."/>
            <person name="Bishai W."/>
            <person name="Jacobs W.R. Jr."/>
            <person name="Venter J.C."/>
            <person name="Fraser C.M."/>
        </authorList>
    </citation>
    <scope>NUCLEOTIDE SEQUENCE [LARGE SCALE GENOMIC DNA]</scope>
    <source>
        <strain>CDC 1551 / Oshkosh</strain>
    </source>
</reference>
<sequence>MSIPENAIAVVGMAGRFPGAKDVSAFWSNLRRGKESIVTLSEQELRDAGVSDKTLADPAYVRRAPLLDGIDEFDAGFFGFPPLAAQVLDPQHRLFLQCAWHALEDAGADPARFDGSIGVYGTSSPSGYLLHNLLSHRDPNAVLAEGLNFDQFSLFLQNDKDFLATRISHAFNLRGPSIAVQTACSSSLVAVHLACLSLLSGECDMALAGGSSLCIPHRVGYFTSPGSMVSAVGHCRPFDVRADGTVFGSGVGLVVLKPLAAAIDAGDRIHAVIRGSAINNDGSAKMGYAAPNPAAQADVIAEAHAVSGIDSSTVSYVECHGTGTPLGDPIEIQGLRAAFEVSQTSRSAPCVLGSVKSNIGHLEVAAGIAGLIKTILCLKNKALPATLHYTSPNPELRLDQSPFVVQSKYGPWECDGVRRAGVSSFGVGGTNAHVVLEEAPAEASEVSAHAEPAGPQVILLSAQTAAALGESRTALAAALETQDGPRLSDVAYTLARRRKHNVTMAAVVHDREHAATVLRAAEHDNVFVGEAAHDGEHGDRADAAPTSDRVVFLFPGQGAQHVGMAKGLYDTEPVFAQHFDTCAAGFRDETGIDLHAEVFDGTATDLERIDRSQPALFTVEYALAKLVDTFGVRAGAYIGYSTGEYIAATLAGVFDLQTAIKTVSLRARLMHESPPGAMVAVALGPDDVTQYLPPEVELSAVNDPGNCVVAGPKDQIRALRQRLTEAGIPVRRVRATHAFHTSAMDPMLGQFQEFLSRQQLRPPRTPLLSNLTGSWMSDQQVVDPASWTRQISSPIRFADELDVVLAAPSRILVEVGPGGSLTGSAMRHPKWSTTHRTVRLMRHPLQDVDDRDTFLRALGELWSAGVEVDWTPRRPAVPHLVSLPGYPFARQRHWVEPNHTVWAQAPGANNGSPAGTADGSTAATVDAARNGESQTEVTLQRIWSQCLGVSSVDRNANFFDLGGDSLMAISIAMAAANEGLTITPQDLYEYPTLASLTAAVDASFASSGLAKPPEAQANPAVPPNVTYFLDRGLRDTGRCRVPLILRLDPKIGLPDIRAVLTAVVNHHDALRLHLVGNDGIWEQHIAAPAEFTGLSNRSVPNGVAAGSPEERAAVLGILAELLEDQTDPNAPLAAVHIAAAHGGPHYLCLAIHAMVTDDSSRQILATDIVTAFGQRLAGEEITLEPVSTGWREWSLRCAALATHPAALDTRSYWIENSTKATLWLADALPNAHTAHPPRADELTKLSSTLSVEQTSELDDGRRRFRRSIQTILLAALGRTIAQTVGEGVVAVELEGEGRSVLRPDVDLRRTVGWFTTYYPVPLACATGLGALAQLDAVHNTLKSVPHYGIGYGLLRYVYAPTGRVLGAQRTPDIHFRYAGVIPELPSGDAPVQFDSDMTLPVREPIPGMGHAIELRVYRFGGSLHLDWWYDTRRIPAATAEALERTFPLALSALIQEAIAAEHTEHDDSEIVGEPEAGALVDLSSMDAG</sequence>
<evidence type="ECO:0000250" key="1"/>
<evidence type="ECO:0000250" key="2">
    <source>
        <dbReference type="UniProtKB" id="P9WQE1"/>
    </source>
</evidence>
<evidence type="ECO:0000255" key="3">
    <source>
        <dbReference type="PROSITE-ProRule" id="PRU00258"/>
    </source>
</evidence>
<evidence type="ECO:0000255" key="4">
    <source>
        <dbReference type="PROSITE-ProRule" id="PRU01348"/>
    </source>
</evidence>
<evidence type="ECO:0000255" key="5">
    <source>
        <dbReference type="PROSITE-ProRule" id="PRU10022"/>
    </source>
</evidence>
<evidence type="ECO:0000305" key="6"/>
<keyword id="KW-0276">Fatty acid metabolism</keyword>
<keyword id="KW-0443">Lipid metabolism</keyword>
<keyword id="KW-0511">Multifunctional enzyme</keyword>
<keyword id="KW-0521">NADP</keyword>
<keyword id="KW-0560">Oxidoreductase</keyword>
<keyword id="KW-0596">Phosphopantetheine</keyword>
<keyword id="KW-0597">Phosphoprotein</keyword>
<keyword id="KW-1185">Reference proteome</keyword>
<keyword id="KW-0808">Transferase</keyword>
<name>PPSE_MYCTO</name>
<protein>
    <recommendedName>
        <fullName evidence="6">Phenolphthiocerol/phthiocerol polyketide synthase subunit E</fullName>
        <ecNumber evidence="2">2.3.1.292</ecNumber>
    </recommendedName>
    <alternativeName>
        <fullName>(Phenol)carboxyphthiodiolenone synthase subunit E</fullName>
    </alternativeName>
    <alternativeName>
        <fullName>Beta-ketoacyl-acyl-carrier-protein synthase I</fullName>
    </alternativeName>
    <alternativeName>
        <fullName>Phthiocerol synthesis polyketide synthase type I PpsE</fullName>
    </alternativeName>
</protein>